<organism>
    <name type="scientific">Saccharomyces cerevisiae (strain ATCC 204508 / S288c)</name>
    <name type="common">Baker's yeast</name>
    <dbReference type="NCBI Taxonomy" id="559292"/>
    <lineage>
        <taxon>Eukaryota</taxon>
        <taxon>Fungi</taxon>
        <taxon>Dikarya</taxon>
        <taxon>Ascomycota</taxon>
        <taxon>Saccharomycotina</taxon>
        <taxon>Saccharomycetes</taxon>
        <taxon>Saccharomycetales</taxon>
        <taxon>Saccharomycetaceae</taxon>
        <taxon>Saccharomyces</taxon>
    </lineage>
</organism>
<feature type="chain" id="PRO_0000299633" description="Uncharacterized protein YLR296W">
    <location>
        <begin position="1"/>
        <end position="108"/>
    </location>
</feature>
<feature type="transmembrane region" description="Helical" evidence="1">
    <location>
        <begin position="72"/>
        <end position="94"/>
    </location>
</feature>
<name>YL296_YEAST</name>
<evidence type="ECO:0000255" key="1"/>
<evidence type="ECO:0000305" key="2"/>
<reference key="1">
    <citation type="journal article" date="1997" name="Nature">
        <title>The nucleotide sequence of Saccharomyces cerevisiae chromosome XII.</title>
        <authorList>
            <person name="Johnston M."/>
            <person name="Hillier L.W."/>
            <person name="Riles L."/>
            <person name="Albermann K."/>
            <person name="Andre B."/>
            <person name="Ansorge W."/>
            <person name="Benes V."/>
            <person name="Brueckner M."/>
            <person name="Delius H."/>
            <person name="Dubois E."/>
            <person name="Duesterhoeft A."/>
            <person name="Entian K.-D."/>
            <person name="Floeth M."/>
            <person name="Goffeau A."/>
            <person name="Hebling U."/>
            <person name="Heumann K."/>
            <person name="Heuss-Neitzel D."/>
            <person name="Hilbert H."/>
            <person name="Hilger F."/>
            <person name="Kleine K."/>
            <person name="Koetter P."/>
            <person name="Louis E.J."/>
            <person name="Messenguy F."/>
            <person name="Mewes H.-W."/>
            <person name="Miosga T."/>
            <person name="Moestl D."/>
            <person name="Mueller-Auer S."/>
            <person name="Nentwich U."/>
            <person name="Obermaier B."/>
            <person name="Piravandi E."/>
            <person name="Pohl T.M."/>
            <person name="Portetelle D."/>
            <person name="Purnelle B."/>
            <person name="Rechmann S."/>
            <person name="Rieger M."/>
            <person name="Rinke M."/>
            <person name="Rose M."/>
            <person name="Scharfe M."/>
            <person name="Scherens B."/>
            <person name="Scholler P."/>
            <person name="Schwager C."/>
            <person name="Schwarz S."/>
            <person name="Underwood A.P."/>
            <person name="Urrestarazu L.A."/>
            <person name="Vandenbol M."/>
            <person name="Verhasselt P."/>
            <person name="Vierendeels F."/>
            <person name="Voet M."/>
            <person name="Volckaert G."/>
            <person name="Voss H."/>
            <person name="Wambutt R."/>
            <person name="Wedler E."/>
            <person name="Wedler H."/>
            <person name="Zimmermann F.K."/>
            <person name="Zollner A."/>
            <person name="Hani J."/>
            <person name="Hoheisel J.D."/>
        </authorList>
    </citation>
    <scope>NUCLEOTIDE SEQUENCE [LARGE SCALE GENOMIC DNA]</scope>
    <source>
        <strain>ATCC 204508 / S288c</strain>
    </source>
</reference>
<reference key="2">
    <citation type="journal article" date="2014" name="G3 (Bethesda)">
        <title>The reference genome sequence of Saccharomyces cerevisiae: Then and now.</title>
        <authorList>
            <person name="Engel S.R."/>
            <person name="Dietrich F.S."/>
            <person name="Fisk D.G."/>
            <person name="Binkley G."/>
            <person name="Balakrishnan R."/>
            <person name="Costanzo M.C."/>
            <person name="Dwight S.S."/>
            <person name="Hitz B.C."/>
            <person name="Karra K."/>
            <person name="Nash R.S."/>
            <person name="Weng S."/>
            <person name="Wong E.D."/>
            <person name="Lloyd P."/>
            <person name="Skrzypek M.S."/>
            <person name="Miyasato S.R."/>
            <person name="Simison M."/>
            <person name="Cherry J.M."/>
        </authorList>
    </citation>
    <scope>GENOME REANNOTATION</scope>
    <source>
        <strain>ATCC 204508 / S288c</strain>
    </source>
</reference>
<reference key="3">
    <citation type="journal article" date="2007" name="Genome Res.">
        <title>Approaching a complete repository of sequence-verified protein-encoding clones for Saccharomyces cerevisiae.</title>
        <authorList>
            <person name="Hu Y."/>
            <person name="Rolfs A."/>
            <person name="Bhullar B."/>
            <person name="Murthy T.V.S."/>
            <person name="Zhu C."/>
            <person name="Berger M.F."/>
            <person name="Camargo A.A."/>
            <person name="Kelley F."/>
            <person name="McCarron S."/>
            <person name="Jepson D."/>
            <person name="Richardson A."/>
            <person name="Raphael J."/>
            <person name="Moreira D."/>
            <person name="Taycher E."/>
            <person name="Zuo D."/>
            <person name="Mohr S."/>
            <person name="Kane M.F."/>
            <person name="Williamson J."/>
            <person name="Simpson A.J.G."/>
            <person name="Bulyk M.L."/>
            <person name="Harlow E."/>
            <person name="Marsischky G."/>
            <person name="Kolodner R.D."/>
            <person name="LaBaer J."/>
        </authorList>
    </citation>
    <scope>NUCLEOTIDE SEQUENCE [GENOMIC DNA]</scope>
    <source>
        <strain>ATCC 204508 / S288c</strain>
    </source>
</reference>
<accession>Q05898</accession>
<accession>A0A1S0T0A8</accession>
<comment type="subcellular location">
    <subcellularLocation>
        <location evidence="2">Membrane</location>
        <topology evidence="2">Single-pass membrane protein</topology>
    </subcellularLocation>
</comment>
<gene>
    <name type="ordered locus">YLR296W</name>
    <name type="ORF">L8003.6</name>
</gene>
<keyword id="KW-0472">Membrane</keyword>
<keyword id="KW-1185">Reference proteome</keyword>
<keyword id="KW-0812">Transmembrane</keyword>
<keyword id="KW-1133">Transmembrane helix</keyword>
<protein>
    <recommendedName>
        <fullName>Uncharacterized protein YLR296W</fullName>
    </recommendedName>
</protein>
<proteinExistence type="predicted"/>
<sequence length="108" mass="12180">MGSSRVIRHQASNYAQSAYQCHIKEPLLSLFGNEKQHSSGTTAAAAITFPQKLIIDQLTRKRKTKKKKIRKLGLHTSVFFFLRIVCMSSAASVFTGIRCVFMFRTNAK</sequence>
<dbReference type="EMBL" id="U17243">
    <property type="protein sequence ID" value="AAB67341.1"/>
    <property type="molecule type" value="Genomic_DNA"/>
</dbReference>
<dbReference type="EMBL" id="AY558219">
    <property type="protein sequence ID" value="AAS56545.1"/>
    <property type="molecule type" value="Genomic_DNA"/>
</dbReference>
<dbReference type="EMBL" id="BK006945">
    <property type="protein sequence ID" value="DAA80319.1"/>
    <property type="molecule type" value="Genomic_DNA"/>
</dbReference>
<dbReference type="PIR" id="S50380">
    <property type="entry name" value="S50380"/>
</dbReference>
<dbReference type="RefSeq" id="NP_001335799.1">
    <property type="nucleotide sequence ID" value="NM_001348859.1"/>
</dbReference>
<dbReference type="SMR" id="Q05898"/>
<dbReference type="FunCoup" id="Q05898">
    <property type="interactions" value="27"/>
</dbReference>
<dbReference type="IntAct" id="Q05898">
    <property type="interactions" value="1"/>
</dbReference>
<dbReference type="STRING" id="4932.YLR296W"/>
<dbReference type="PaxDb" id="4932-YLR296W"/>
<dbReference type="EnsemblFungi" id="YLR296W_mRNA">
    <property type="protein sequence ID" value="YLR296W"/>
    <property type="gene ID" value="YLR296W"/>
</dbReference>
<dbReference type="GeneID" id="851003"/>
<dbReference type="AGR" id="SGD:S000004287"/>
<dbReference type="SGD" id="S000004287">
    <property type="gene designation" value="YLR296W"/>
</dbReference>
<dbReference type="HOGENOM" id="CLU_2199065_0_0_1"/>
<dbReference type="InParanoid" id="Q05898"/>
<dbReference type="PRO" id="PR:Q05898"/>
<dbReference type="Proteomes" id="UP000002311">
    <property type="component" value="Chromosome XII"/>
</dbReference>
<dbReference type="RNAct" id="Q05898">
    <property type="molecule type" value="protein"/>
</dbReference>
<dbReference type="GO" id="GO:0016020">
    <property type="term" value="C:membrane"/>
    <property type="evidence" value="ECO:0007669"/>
    <property type="project" value="UniProtKB-SubCell"/>
</dbReference>